<gene>
    <name type="ordered locus">SAUSA300_0416</name>
</gene>
<comment type="subcellular location">
    <subcellularLocation>
        <location evidence="1">Cell membrane</location>
        <topology evidence="1">Lipid-anchor</topology>
    </subcellularLocation>
</comment>
<comment type="similarity">
    <text evidence="2">Belongs to the staphylococcal tandem lipoprotein family.</text>
</comment>
<protein>
    <recommendedName>
        <fullName>Uncharacterized lipoprotein SAUSA300_0416</fullName>
    </recommendedName>
</protein>
<reference key="1">
    <citation type="journal article" date="2006" name="Lancet">
        <title>Complete genome sequence of USA300, an epidemic clone of community-acquired meticillin-resistant Staphylococcus aureus.</title>
        <authorList>
            <person name="Diep B.A."/>
            <person name="Gill S.R."/>
            <person name="Chang R.F."/>
            <person name="Phan T.H."/>
            <person name="Chen J.H."/>
            <person name="Davidson M.G."/>
            <person name="Lin F."/>
            <person name="Lin J."/>
            <person name="Carleton H.A."/>
            <person name="Mongodin E.F."/>
            <person name="Sensabaugh G.F."/>
            <person name="Perdreau-Remington F."/>
        </authorList>
    </citation>
    <scope>NUCLEOTIDE SEQUENCE [LARGE SCALE GENOMIC DNA]</scope>
    <source>
        <strain>USA300</strain>
    </source>
</reference>
<proteinExistence type="inferred from homology"/>
<dbReference type="EMBL" id="CP000255">
    <property type="protein sequence ID" value="ABD20879.1"/>
    <property type="molecule type" value="Genomic_DNA"/>
</dbReference>
<dbReference type="SMR" id="Q2FJJ9"/>
<dbReference type="KEGG" id="saa:SAUSA300_0416"/>
<dbReference type="HOGENOM" id="CLU_071589_0_1_9"/>
<dbReference type="OMA" id="DERKYPI"/>
<dbReference type="Proteomes" id="UP000001939">
    <property type="component" value="Chromosome"/>
</dbReference>
<dbReference type="GO" id="GO:0005886">
    <property type="term" value="C:plasma membrane"/>
    <property type="evidence" value="ECO:0007669"/>
    <property type="project" value="UniProtKB-SubCell"/>
</dbReference>
<dbReference type="Gene3D" id="2.50.20.40">
    <property type="match status" value="1"/>
</dbReference>
<dbReference type="InterPro" id="IPR007595">
    <property type="entry name" value="Csa"/>
</dbReference>
<dbReference type="InterPro" id="IPR038641">
    <property type="entry name" value="Csa_sf"/>
</dbReference>
<dbReference type="NCBIfam" id="TIGR01742">
    <property type="entry name" value="SA_tandem_lipo"/>
    <property type="match status" value="1"/>
</dbReference>
<dbReference type="Pfam" id="PF04507">
    <property type="entry name" value="DUF576"/>
    <property type="match status" value="1"/>
</dbReference>
<dbReference type="PROSITE" id="PS51257">
    <property type="entry name" value="PROKAR_LIPOPROTEIN"/>
    <property type="match status" value="1"/>
</dbReference>
<sequence>MKCFQKLYIFILILIVLMAGCESNKITGDSKETQIKKSFAKTLDVYPTKNLEDFYDKEGYRDGEFKKGDKGKWVIRSEMTTELKNENMVSKGMVIRLNRNSRTCTGEYFVRIVKEDSEGKVYSDERKYPVKMENNKIITLKPIDDEKVKKEIEEFKFFVQYGNFKELENYKDGEVTYNPEAPIYSAQYQLKNSDYNVEQLRKRYNITTKKAPKLLLKGSGNLKGSSVGYKNIEFTFVENKEENIYFTDSINFNPSEDK</sequence>
<keyword id="KW-1003">Cell membrane</keyword>
<keyword id="KW-0449">Lipoprotein</keyword>
<keyword id="KW-0472">Membrane</keyword>
<keyword id="KW-0564">Palmitate</keyword>
<keyword id="KW-0732">Signal</keyword>
<feature type="signal peptide" evidence="1">
    <location>
        <begin position="1"/>
        <end position="20"/>
    </location>
</feature>
<feature type="chain" id="PRO_0000282081" description="Uncharacterized lipoprotein SAUSA300_0416">
    <location>
        <begin position="21"/>
        <end position="258"/>
    </location>
</feature>
<feature type="lipid moiety-binding region" description="N-palmitoyl cysteine" evidence="1">
    <location>
        <position position="21"/>
    </location>
</feature>
<feature type="lipid moiety-binding region" description="S-diacylglycerol cysteine" evidence="1">
    <location>
        <position position="21"/>
    </location>
</feature>
<evidence type="ECO:0000255" key="1">
    <source>
        <dbReference type="PROSITE-ProRule" id="PRU00303"/>
    </source>
</evidence>
<evidence type="ECO:0000305" key="2"/>
<accession>Q2FJJ9</accession>
<organism>
    <name type="scientific">Staphylococcus aureus (strain USA300)</name>
    <dbReference type="NCBI Taxonomy" id="367830"/>
    <lineage>
        <taxon>Bacteria</taxon>
        <taxon>Bacillati</taxon>
        <taxon>Bacillota</taxon>
        <taxon>Bacilli</taxon>
        <taxon>Bacillales</taxon>
        <taxon>Staphylococcaceae</taxon>
        <taxon>Staphylococcus</taxon>
    </lineage>
</organism>
<name>Y416_STAA3</name>